<evidence type="ECO:0000255" key="1">
    <source>
        <dbReference type="HAMAP-Rule" id="MF_03001"/>
    </source>
</evidence>
<evidence type="ECO:0000269" key="2">
    <source>
    </source>
</evidence>
<evidence type="ECO:0000269" key="3">
    <source>
    </source>
</evidence>
<evidence type="ECO:0007744" key="4">
    <source>
    </source>
</evidence>
<sequence length="712" mass="81876">MEVVDIDARAAKLGIDWSQVNFDSIQLPPGEDFGIESDDEAVYQDDQSEFDTGFGNIIVVDHLPVVPKEKFEKLEGVVKKIYNQLGVIKENGLWMPVDPDTKMTLGYCFIEFNTPQEAQNAKEKSHGYKLDKSHIFAVNMFDDFDRLMNVKEEWEPPQARPYVPGENLQKWLTDEKARDQLVIRSGPDTEVFWNDTRQKAPEPVHKRPYWTESYVQWSPLGTYLVTLHKQGAAVWGGADTFTRLMRYQHSMVKLVDFSPGEKYLVTYHSQEPSNPRDASKVEIKVFDVRTGRMMRDFKGSADEFSIGGPGGVAGASWPVFRWAGGKDDKYFAKLSKNTISVYETETFSLIDKKSMKVDNVVDICWSPTDSILSLFVPEQGGGNQPAKVALVQIPSKVELRQKNLFSVSDCKMYWQSSGEYLAVKVDRYTKTKKSTYSGFELFRIKERDIPIEVLELDNKNDKIIAFAWEPKGHRFAVIHGDQPRPDVSFYSMKTAQNTGRVSKLATLKAKQANALFWSPTGKYIILAGLKGFNGQLEFFNVDELETMATAEHFMATDIEWDPTGRYVATAVTSVHEMENGFTIWSFNGIMLYRILKDHFFQLAWRPRPPSFLTAEKEEEIAKTLKKYSKKYEAEDQDVSLLLSEQDREKRKALKEEWEKWVMQWKSLHEEEKLVRQNLRDGEVSDVEEDEYEAKEVEFEDLIDVTEEIVQES</sequence>
<reference key="1">
    <citation type="journal article" date="2001" name="J. Biol. Chem.">
        <title>Plant initiation factor 3 subunit composition resembles mammalian initiation factor 3 and has a novel subunit.</title>
        <authorList>
            <person name="Burks E.A."/>
            <person name="Bezerra P.P."/>
            <person name="Le H."/>
            <person name="Gallie D.R."/>
            <person name="Browning K.S."/>
        </authorList>
    </citation>
    <scope>NUCLEOTIDE SEQUENCE [MRNA]</scope>
    <scope>SUBUNIT</scope>
    <source>
        <strain>cv. Columbia</strain>
    </source>
</reference>
<reference key="2">
    <citation type="journal article" date="2000" name="Nature">
        <title>Sequence and analysis of chromosome 5 of the plant Arabidopsis thaliana.</title>
        <authorList>
            <person name="Tabata S."/>
            <person name="Kaneko T."/>
            <person name="Nakamura Y."/>
            <person name="Kotani H."/>
            <person name="Kato T."/>
            <person name="Asamizu E."/>
            <person name="Miyajima N."/>
            <person name="Sasamoto S."/>
            <person name="Kimura T."/>
            <person name="Hosouchi T."/>
            <person name="Kawashima K."/>
            <person name="Kohara M."/>
            <person name="Matsumoto M."/>
            <person name="Matsuno A."/>
            <person name="Muraki A."/>
            <person name="Nakayama S."/>
            <person name="Nakazaki N."/>
            <person name="Naruo K."/>
            <person name="Okumura S."/>
            <person name="Shinpo S."/>
            <person name="Takeuchi C."/>
            <person name="Wada T."/>
            <person name="Watanabe A."/>
            <person name="Yamada M."/>
            <person name="Yasuda M."/>
            <person name="Sato S."/>
            <person name="de la Bastide M."/>
            <person name="Huang E."/>
            <person name="Spiegel L."/>
            <person name="Gnoj L."/>
            <person name="O'Shaughnessy A."/>
            <person name="Preston R."/>
            <person name="Habermann K."/>
            <person name="Murray J."/>
            <person name="Johnson D."/>
            <person name="Rohlfing T."/>
            <person name="Nelson J."/>
            <person name="Stoneking T."/>
            <person name="Pepin K."/>
            <person name="Spieth J."/>
            <person name="Sekhon M."/>
            <person name="Armstrong J."/>
            <person name="Becker M."/>
            <person name="Belter E."/>
            <person name="Cordum H."/>
            <person name="Cordes M."/>
            <person name="Courtney L."/>
            <person name="Courtney W."/>
            <person name="Dante M."/>
            <person name="Du H."/>
            <person name="Edwards J."/>
            <person name="Fryman J."/>
            <person name="Haakensen B."/>
            <person name="Lamar E."/>
            <person name="Latreille P."/>
            <person name="Leonard S."/>
            <person name="Meyer R."/>
            <person name="Mulvaney E."/>
            <person name="Ozersky P."/>
            <person name="Riley A."/>
            <person name="Strowmatt C."/>
            <person name="Wagner-McPherson C."/>
            <person name="Wollam A."/>
            <person name="Yoakum M."/>
            <person name="Bell M."/>
            <person name="Dedhia N."/>
            <person name="Parnell L."/>
            <person name="Shah R."/>
            <person name="Rodriguez M."/>
            <person name="Hoon See L."/>
            <person name="Vil D."/>
            <person name="Baker J."/>
            <person name="Kirchoff K."/>
            <person name="Toth K."/>
            <person name="King L."/>
            <person name="Bahret A."/>
            <person name="Miller B."/>
            <person name="Marra M.A."/>
            <person name="Martienssen R."/>
            <person name="McCombie W.R."/>
            <person name="Wilson R.K."/>
            <person name="Murphy G."/>
            <person name="Bancroft I."/>
            <person name="Volckaert G."/>
            <person name="Wambutt R."/>
            <person name="Duesterhoeft A."/>
            <person name="Stiekema W."/>
            <person name="Pohl T."/>
            <person name="Entian K.-D."/>
            <person name="Terryn N."/>
            <person name="Hartley N."/>
            <person name="Bent E."/>
            <person name="Johnson S."/>
            <person name="Langham S.-A."/>
            <person name="McCullagh B."/>
            <person name="Robben J."/>
            <person name="Grymonprez B."/>
            <person name="Zimmermann W."/>
            <person name="Ramsperger U."/>
            <person name="Wedler H."/>
            <person name="Balke K."/>
            <person name="Wedler E."/>
            <person name="Peters S."/>
            <person name="van Staveren M."/>
            <person name="Dirkse W."/>
            <person name="Mooijman P."/>
            <person name="Klein Lankhorst R."/>
            <person name="Weitzenegger T."/>
            <person name="Bothe G."/>
            <person name="Rose M."/>
            <person name="Hauf J."/>
            <person name="Berneiser S."/>
            <person name="Hempel S."/>
            <person name="Feldpausch M."/>
            <person name="Lamberth S."/>
            <person name="Villarroel R."/>
            <person name="Gielen J."/>
            <person name="Ardiles W."/>
            <person name="Bents O."/>
            <person name="Lemcke K."/>
            <person name="Kolesov G."/>
            <person name="Mayer K.F.X."/>
            <person name="Rudd S."/>
            <person name="Schoof H."/>
            <person name="Schueller C."/>
            <person name="Zaccaria P."/>
            <person name="Mewes H.-W."/>
            <person name="Bevan M."/>
            <person name="Fransz P.F."/>
        </authorList>
    </citation>
    <scope>NUCLEOTIDE SEQUENCE [LARGE SCALE GENOMIC DNA]</scope>
    <source>
        <strain>cv. Columbia</strain>
    </source>
</reference>
<reference key="3">
    <citation type="journal article" date="2017" name="Plant J.">
        <title>Araport11: a complete reannotation of the Arabidopsis thaliana reference genome.</title>
        <authorList>
            <person name="Cheng C.Y."/>
            <person name="Krishnakumar V."/>
            <person name="Chan A.P."/>
            <person name="Thibaud-Nissen F."/>
            <person name="Schobel S."/>
            <person name="Town C.D."/>
        </authorList>
    </citation>
    <scope>GENOME REANNOTATION</scope>
    <source>
        <strain>cv. Columbia</strain>
    </source>
</reference>
<reference key="4">
    <citation type="journal article" date="2003" name="Science">
        <title>Empirical analysis of transcriptional activity in the Arabidopsis genome.</title>
        <authorList>
            <person name="Yamada K."/>
            <person name="Lim J."/>
            <person name="Dale J.M."/>
            <person name="Chen H."/>
            <person name="Shinn P."/>
            <person name="Palm C.J."/>
            <person name="Southwick A.M."/>
            <person name="Wu H.C."/>
            <person name="Kim C.J."/>
            <person name="Nguyen M."/>
            <person name="Pham P.K."/>
            <person name="Cheuk R.F."/>
            <person name="Karlin-Newmann G."/>
            <person name="Liu S.X."/>
            <person name="Lam B."/>
            <person name="Sakano H."/>
            <person name="Wu T."/>
            <person name="Yu G."/>
            <person name="Miranda M."/>
            <person name="Quach H.L."/>
            <person name="Tripp M."/>
            <person name="Chang C.H."/>
            <person name="Lee J.M."/>
            <person name="Toriumi M.J."/>
            <person name="Chan M.M."/>
            <person name="Tang C.C."/>
            <person name="Onodera C.S."/>
            <person name="Deng J.M."/>
            <person name="Akiyama K."/>
            <person name="Ansari Y."/>
            <person name="Arakawa T."/>
            <person name="Banh J."/>
            <person name="Banno F."/>
            <person name="Bowser L."/>
            <person name="Brooks S.Y."/>
            <person name="Carninci P."/>
            <person name="Chao Q."/>
            <person name="Choy N."/>
            <person name="Enju A."/>
            <person name="Goldsmith A.D."/>
            <person name="Gurjal M."/>
            <person name="Hansen N.F."/>
            <person name="Hayashizaki Y."/>
            <person name="Johnson-Hopson C."/>
            <person name="Hsuan V.W."/>
            <person name="Iida K."/>
            <person name="Karnes M."/>
            <person name="Khan S."/>
            <person name="Koesema E."/>
            <person name="Ishida J."/>
            <person name="Jiang P.X."/>
            <person name="Jones T."/>
            <person name="Kawai J."/>
            <person name="Kamiya A."/>
            <person name="Meyers C."/>
            <person name="Nakajima M."/>
            <person name="Narusaka M."/>
            <person name="Seki M."/>
            <person name="Sakurai T."/>
            <person name="Satou M."/>
            <person name="Tamse R."/>
            <person name="Vaysberg M."/>
            <person name="Wallender E.K."/>
            <person name="Wong C."/>
            <person name="Yamamura Y."/>
            <person name="Yuan S."/>
            <person name="Shinozaki K."/>
            <person name="Davis R.W."/>
            <person name="Theologis A."/>
            <person name="Ecker J.R."/>
        </authorList>
    </citation>
    <scope>NUCLEOTIDE SEQUENCE [LARGE SCALE MRNA]</scope>
    <source>
        <strain>cv. Columbia</strain>
    </source>
</reference>
<reference key="5">
    <citation type="journal article" date="2004" name="Plant Cell">
        <title>Translational regulation via 5' mRNA leader sequences revealed by mutational analysis of the Arabidopsis translation initiation factor subunit eIF3h.</title>
        <authorList>
            <person name="Kim T.-H."/>
            <person name="Kim B.-H."/>
            <person name="Yahalom A."/>
            <person name="Chamovitz D.A."/>
            <person name="von Arnim A.G."/>
        </authorList>
    </citation>
    <scope>INTERACTION WITH TIF3H1</scope>
</reference>
<reference key="6">
    <citation type="journal article" date="2012" name="Mol. Cell. Proteomics">
        <title>Comparative large-scale characterisation of plant vs. mammal proteins reveals similar and idiosyncratic N-alpha acetylation features.</title>
        <authorList>
            <person name="Bienvenut W.V."/>
            <person name="Sumpton D."/>
            <person name="Martinez A."/>
            <person name="Lilla S."/>
            <person name="Espagne C."/>
            <person name="Meinnel T."/>
            <person name="Giglione C."/>
        </authorList>
    </citation>
    <scope>ACETYLATION [LARGE SCALE ANALYSIS] AT MET-1</scope>
    <scope>IDENTIFICATION BY MASS SPECTROMETRY [LARGE SCALE ANALYSIS]</scope>
</reference>
<dbReference type="EMBL" id="AF285834">
    <property type="protein sequence ID" value="AAG53615.1"/>
    <property type="molecule type" value="mRNA"/>
</dbReference>
<dbReference type="EMBL" id="AC007478">
    <property type="status" value="NOT_ANNOTATED_CDS"/>
    <property type="molecule type" value="Genomic_DNA"/>
</dbReference>
<dbReference type="EMBL" id="CP002688">
    <property type="protein sequence ID" value="AED93709.1"/>
    <property type="molecule type" value="Genomic_DNA"/>
</dbReference>
<dbReference type="EMBL" id="CP002688">
    <property type="protein sequence ID" value="ANM68848.1"/>
    <property type="molecule type" value="Genomic_DNA"/>
</dbReference>
<dbReference type="EMBL" id="AF378883">
    <property type="protein sequence ID" value="AAK55686.1"/>
    <property type="molecule type" value="mRNA"/>
</dbReference>
<dbReference type="EMBL" id="AY102149">
    <property type="protein sequence ID" value="AAM26716.1"/>
    <property type="molecule type" value="mRNA"/>
</dbReference>
<dbReference type="RefSeq" id="NP_001330567.1">
    <molecule id="Q9C5Z1-1"/>
    <property type="nucleotide sequence ID" value="NM_001344024.1"/>
</dbReference>
<dbReference type="RefSeq" id="NP_568498.1">
    <molecule id="Q9C5Z1-1"/>
    <property type="nucleotide sequence ID" value="NM_122646.4"/>
</dbReference>
<dbReference type="SMR" id="Q9C5Z1"/>
<dbReference type="BioGRID" id="18100">
    <property type="interactions" value="44"/>
</dbReference>
<dbReference type="FunCoup" id="Q9C5Z1">
    <property type="interactions" value="5152"/>
</dbReference>
<dbReference type="IntAct" id="Q9C5Z1">
    <property type="interactions" value="2"/>
</dbReference>
<dbReference type="STRING" id="3702.Q9C5Z1"/>
<dbReference type="iPTMnet" id="Q9C5Z1"/>
<dbReference type="PaxDb" id="3702-AT5G27640.2"/>
<dbReference type="ProteomicsDB" id="222317">
    <molecule id="Q9C5Z1-1"/>
</dbReference>
<dbReference type="DNASU" id="832826"/>
<dbReference type="EnsemblPlants" id="AT5G27640.1">
    <molecule id="Q9C5Z1-1"/>
    <property type="protein sequence ID" value="AT5G27640.1"/>
    <property type="gene ID" value="AT5G27640"/>
</dbReference>
<dbReference type="EnsemblPlants" id="AT5G27640.3">
    <molecule id="Q9C5Z1-1"/>
    <property type="protein sequence ID" value="AT5G27640.3"/>
    <property type="gene ID" value="AT5G27640"/>
</dbReference>
<dbReference type="GeneID" id="832826"/>
<dbReference type="Gramene" id="AT5G27640.1">
    <molecule id="Q9C5Z1-1"/>
    <property type="protein sequence ID" value="AT5G27640.1"/>
    <property type="gene ID" value="AT5G27640"/>
</dbReference>
<dbReference type="Gramene" id="AT5G27640.3">
    <molecule id="Q9C5Z1-1"/>
    <property type="protein sequence ID" value="AT5G27640.3"/>
    <property type="gene ID" value="AT5G27640"/>
</dbReference>
<dbReference type="KEGG" id="ath:AT5G27640"/>
<dbReference type="Araport" id="AT5G27640"/>
<dbReference type="TAIR" id="AT5G27640">
    <property type="gene designation" value="TIF3B1"/>
</dbReference>
<dbReference type="eggNOG" id="KOG2314">
    <property type="taxonomic scope" value="Eukaryota"/>
</dbReference>
<dbReference type="HOGENOM" id="CLU_011152_2_0_1"/>
<dbReference type="InParanoid" id="Q9C5Z1"/>
<dbReference type="OMA" id="LWGGPQF"/>
<dbReference type="OrthoDB" id="10250414at2759"/>
<dbReference type="PhylomeDB" id="Q9C5Z1"/>
<dbReference type="PRO" id="PR:Q9C5Z1"/>
<dbReference type="Proteomes" id="UP000006548">
    <property type="component" value="Chromosome 5"/>
</dbReference>
<dbReference type="ExpressionAtlas" id="Q9C5Z1">
    <property type="expression patterns" value="baseline and differential"/>
</dbReference>
<dbReference type="GO" id="GO:0016282">
    <property type="term" value="C:eukaryotic 43S preinitiation complex"/>
    <property type="evidence" value="ECO:0007669"/>
    <property type="project" value="UniProtKB-UniRule"/>
</dbReference>
<dbReference type="GO" id="GO:0033290">
    <property type="term" value="C:eukaryotic 48S preinitiation complex"/>
    <property type="evidence" value="ECO:0007669"/>
    <property type="project" value="UniProtKB-UniRule"/>
</dbReference>
<dbReference type="GO" id="GO:0005852">
    <property type="term" value="C:eukaryotic translation initiation factor 3 complex"/>
    <property type="evidence" value="ECO:0007669"/>
    <property type="project" value="UniProtKB-UniRule"/>
</dbReference>
<dbReference type="GO" id="GO:0003723">
    <property type="term" value="F:RNA binding"/>
    <property type="evidence" value="ECO:0007669"/>
    <property type="project" value="UniProtKB-UniRule"/>
</dbReference>
<dbReference type="GO" id="GO:0003743">
    <property type="term" value="F:translation initiation factor activity"/>
    <property type="evidence" value="ECO:0007669"/>
    <property type="project" value="UniProtKB-UniRule"/>
</dbReference>
<dbReference type="GO" id="GO:0031369">
    <property type="term" value="F:translation initiation factor binding"/>
    <property type="evidence" value="ECO:0007669"/>
    <property type="project" value="InterPro"/>
</dbReference>
<dbReference type="GO" id="GO:0001732">
    <property type="term" value="P:formation of cytoplasmic translation initiation complex"/>
    <property type="evidence" value="ECO:0007669"/>
    <property type="project" value="UniProtKB-UniRule"/>
</dbReference>
<dbReference type="CDD" id="cd12278">
    <property type="entry name" value="RRM_eIF3B"/>
    <property type="match status" value="1"/>
</dbReference>
<dbReference type="FunFam" id="2.130.10.10:FF:000260">
    <property type="entry name" value="Eukaryotic translation initiation factor 3 subunit B"/>
    <property type="match status" value="1"/>
</dbReference>
<dbReference type="FunFam" id="2.130.10.10:FF:000286">
    <property type="entry name" value="Eukaryotic translation initiation factor 3 subunit B"/>
    <property type="match status" value="1"/>
</dbReference>
<dbReference type="FunFam" id="3.30.70.330:FF:000235">
    <property type="entry name" value="Eukaryotic translation initiation factor 3 subunit B"/>
    <property type="match status" value="1"/>
</dbReference>
<dbReference type="Gene3D" id="3.30.70.330">
    <property type="match status" value="1"/>
</dbReference>
<dbReference type="Gene3D" id="2.130.10.10">
    <property type="entry name" value="YVTN repeat-like/Quinoprotein amine dehydrogenase"/>
    <property type="match status" value="2"/>
</dbReference>
<dbReference type="HAMAP" id="MF_03001">
    <property type="entry name" value="eIF3b"/>
    <property type="match status" value="1"/>
</dbReference>
<dbReference type="InterPro" id="IPR011400">
    <property type="entry name" value="EIF3B"/>
</dbReference>
<dbReference type="InterPro" id="IPR034363">
    <property type="entry name" value="eIF3B_RRM"/>
</dbReference>
<dbReference type="InterPro" id="IPR012677">
    <property type="entry name" value="Nucleotide-bd_a/b_plait_sf"/>
</dbReference>
<dbReference type="InterPro" id="IPR035979">
    <property type="entry name" value="RBD_domain_sf"/>
</dbReference>
<dbReference type="InterPro" id="IPR000504">
    <property type="entry name" value="RRM_dom"/>
</dbReference>
<dbReference type="InterPro" id="IPR013979">
    <property type="entry name" value="TIF_beta_prop-like"/>
</dbReference>
<dbReference type="InterPro" id="IPR015943">
    <property type="entry name" value="WD40/YVTN_repeat-like_dom_sf"/>
</dbReference>
<dbReference type="PANTHER" id="PTHR14068">
    <property type="entry name" value="EUKARYOTIC TRANSLATION INITIATION FACTOR 3 EIF3 -RELATED"/>
    <property type="match status" value="1"/>
</dbReference>
<dbReference type="PANTHER" id="PTHR14068:SF0">
    <property type="entry name" value="EUKARYOTIC TRANSLATION INITIATION FACTOR 3 SUBUNIT B"/>
    <property type="match status" value="1"/>
</dbReference>
<dbReference type="Pfam" id="PF08662">
    <property type="entry name" value="eIF2A"/>
    <property type="match status" value="1"/>
</dbReference>
<dbReference type="Pfam" id="PF00076">
    <property type="entry name" value="RRM_1"/>
    <property type="match status" value="1"/>
</dbReference>
<dbReference type="PIRSF" id="PIRSF036424">
    <property type="entry name" value="eIF3b"/>
    <property type="match status" value="1"/>
</dbReference>
<dbReference type="SMART" id="SM00360">
    <property type="entry name" value="RRM"/>
    <property type="match status" value="1"/>
</dbReference>
<dbReference type="SUPFAM" id="SSF82171">
    <property type="entry name" value="DPP6 N-terminal domain-like"/>
    <property type="match status" value="1"/>
</dbReference>
<dbReference type="SUPFAM" id="SSF54928">
    <property type="entry name" value="RNA-binding domain, RBD"/>
    <property type="match status" value="1"/>
</dbReference>
<dbReference type="PROSITE" id="PS50102">
    <property type="entry name" value="RRM"/>
    <property type="match status" value="1"/>
</dbReference>
<name>EIF3B_ARATH</name>
<organism>
    <name type="scientific">Arabidopsis thaliana</name>
    <name type="common">Mouse-ear cress</name>
    <dbReference type="NCBI Taxonomy" id="3702"/>
    <lineage>
        <taxon>Eukaryota</taxon>
        <taxon>Viridiplantae</taxon>
        <taxon>Streptophyta</taxon>
        <taxon>Embryophyta</taxon>
        <taxon>Tracheophyta</taxon>
        <taxon>Spermatophyta</taxon>
        <taxon>Magnoliopsida</taxon>
        <taxon>eudicotyledons</taxon>
        <taxon>Gunneridae</taxon>
        <taxon>Pentapetalae</taxon>
        <taxon>rosids</taxon>
        <taxon>malvids</taxon>
        <taxon>Brassicales</taxon>
        <taxon>Brassicaceae</taxon>
        <taxon>Camelineae</taxon>
        <taxon>Arabidopsis</taxon>
    </lineage>
</organism>
<accession>Q9C5Z1</accession>
<comment type="function">
    <text evidence="1">RNA-binding component of the eukaryotic translation initiation factor 3 (eIF-3) complex, which is involved in protein synthesis of a specialized repertoire of mRNAs and, together with other initiation factors, stimulates binding of mRNA and methionyl-tRNAi to the 40S ribosome. The eIF-3 complex specifically targets and initiates translation of a subset of mRNAs involved in cell proliferation.</text>
</comment>
<comment type="subunit">
    <text evidence="1 2 3">Component of the eukaryotic translation initiation factor 3 (eIF-3) complex, which is composed of at least 13 different subunits. Binds to the translation initiation factor TIF3H1 (PubMed:15548739).</text>
</comment>
<comment type="subcellular location">
    <subcellularLocation>
        <location evidence="1">Cytoplasm</location>
    </subcellularLocation>
</comment>
<comment type="alternative products">
    <event type="alternative splicing"/>
    <isoform>
        <id>Q9C5Z1-1</id>
        <name>1</name>
        <sequence type="displayed"/>
    </isoform>
    <text>A number of isoforms are produced. According to EST sequences.</text>
</comment>
<comment type="similarity">
    <text evidence="1">Belongs to the eIF-3 subunit B family.</text>
</comment>
<keyword id="KW-0007">Acetylation</keyword>
<keyword id="KW-0025">Alternative splicing</keyword>
<keyword id="KW-0963">Cytoplasm</keyword>
<keyword id="KW-0396">Initiation factor</keyword>
<keyword id="KW-0648">Protein biosynthesis</keyword>
<keyword id="KW-1185">Reference proteome</keyword>
<keyword id="KW-0694">RNA-binding</keyword>
<protein>
    <recommendedName>
        <fullName evidence="1">Eukaryotic translation initiation factor 3 subunit B</fullName>
        <shortName evidence="1">eIF3b</shortName>
    </recommendedName>
    <alternativeName>
        <fullName evidence="1">eIF-3-eta</fullName>
    </alternativeName>
    <alternativeName>
        <fullName evidence="1">eIF3 p110</fullName>
    </alternativeName>
    <alternativeName>
        <fullName>p82</fullName>
    </alternativeName>
</protein>
<proteinExistence type="evidence at protein level"/>
<feature type="chain" id="PRO_0000123532" description="Eukaryotic translation initiation factor 3 subunit B">
    <location>
        <begin position="1"/>
        <end position="712"/>
    </location>
</feature>
<feature type="domain" description="RRM" evidence="1">
    <location>
        <begin position="56"/>
        <end position="143"/>
    </location>
</feature>
<feature type="modified residue" description="N-acetylmethionine" evidence="4">
    <location>
        <position position="1"/>
    </location>
</feature>
<gene>
    <name type="primary">TIF3B1</name>
    <name type="ordered locus">At5g27640</name>
    <name type="ORF">F15A18_100</name>
</gene>